<reference evidence="8" key="1">
    <citation type="journal article" date="2006" name="Genetics">
        <title>Identification of guanylyl cyclases that function in thermosensory neurons of Caenorhabditis elegans.</title>
        <authorList>
            <person name="Inada H."/>
            <person name="Ito H."/>
            <person name="Satterlee J."/>
            <person name="Sengupta P."/>
            <person name="Matsumoto K."/>
            <person name="Mori I."/>
        </authorList>
    </citation>
    <scope>NUCLEOTIDE SEQUENCE [MRNA]</scope>
    <scope>FUNCTION</scope>
    <scope>SUBCELLULAR LOCATION</scope>
    <scope>TISSUE SPECIFICITY</scope>
</reference>
<reference evidence="9" key="2">
    <citation type="journal article" date="1998" name="Science">
        <title>Genome sequence of the nematode C. elegans: a platform for investigating biology.</title>
        <authorList>
            <consortium name="The C. elegans sequencing consortium"/>
        </authorList>
    </citation>
    <scope>NUCLEOTIDE SEQUENCE [LARGE SCALE GENOMIC DNA]</scope>
    <source>
        <strain evidence="9">Bristol N2</strain>
    </source>
</reference>
<name>GCY18_CAEEL</name>
<keyword id="KW-1003">Cell membrane</keyword>
<keyword id="KW-0966">Cell projection</keyword>
<keyword id="KW-0141">cGMP biosynthesis</keyword>
<keyword id="KW-0175">Coiled coil</keyword>
<keyword id="KW-0325">Glycoprotein</keyword>
<keyword id="KW-0342">GTP-binding</keyword>
<keyword id="KW-0456">Lyase</keyword>
<keyword id="KW-0460">Magnesium</keyword>
<keyword id="KW-0472">Membrane</keyword>
<keyword id="KW-0479">Metal-binding</keyword>
<keyword id="KW-0547">Nucleotide-binding</keyword>
<keyword id="KW-0675">Receptor</keyword>
<keyword id="KW-1185">Reference proteome</keyword>
<keyword id="KW-0732">Signal</keyword>
<keyword id="KW-0812">Transmembrane</keyword>
<keyword id="KW-1133">Transmembrane helix</keyword>
<organism evidence="9">
    <name type="scientific">Caenorhabditis elegans</name>
    <dbReference type="NCBI Taxonomy" id="6239"/>
    <lineage>
        <taxon>Eukaryota</taxon>
        <taxon>Metazoa</taxon>
        <taxon>Ecdysozoa</taxon>
        <taxon>Nematoda</taxon>
        <taxon>Chromadorea</taxon>
        <taxon>Rhabditida</taxon>
        <taxon>Rhabditina</taxon>
        <taxon>Rhabditomorpha</taxon>
        <taxon>Rhabditoidea</taxon>
        <taxon>Rhabditidae</taxon>
        <taxon>Peloderinae</taxon>
        <taxon>Caenorhabditis</taxon>
    </lineage>
</organism>
<protein>
    <recommendedName>
        <fullName evidence="7">Receptor-type guanylate cyclase gcy-18</fullName>
        <ecNumber evidence="1">4.6.1.2</ecNumber>
    </recommendedName>
</protein>
<proteinExistence type="evidence at transcript level"/>
<accession>G5EFQ0</accession>
<gene>
    <name evidence="10" type="primary">gcy-18</name>
    <name evidence="10" type="ORF">ZK896.8</name>
</gene>
<feature type="signal peptide" evidence="2">
    <location>
        <begin position="1"/>
        <end position="18"/>
    </location>
</feature>
<feature type="chain" id="PRO_0000433286" description="Receptor-type guanylate cyclase gcy-18" evidence="2">
    <location>
        <begin position="19"/>
        <end position="1113"/>
    </location>
</feature>
<feature type="topological domain" description="Extracellular" evidence="2">
    <location>
        <begin position="19"/>
        <end position="499"/>
    </location>
</feature>
<feature type="transmembrane region" description="Helical" evidence="2">
    <location>
        <begin position="500"/>
        <end position="520"/>
    </location>
</feature>
<feature type="topological domain" description="Cytoplasmic" evidence="2">
    <location>
        <begin position="521"/>
        <end position="1113"/>
    </location>
</feature>
<feature type="domain" description="Protein kinase" evidence="4">
    <location>
        <begin position="543"/>
        <end position="848"/>
    </location>
</feature>
<feature type="domain" description="Guanylate cyclase" evidence="3">
    <location>
        <begin position="918"/>
        <end position="1048"/>
    </location>
</feature>
<feature type="coiled-coil region" evidence="2">
    <location>
        <begin position="853"/>
        <end position="884"/>
    </location>
</feature>
<feature type="binding site" evidence="3">
    <location>
        <position position="923"/>
    </location>
    <ligand>
        <name>Mg(2+)</name>
        <dbReference type="ChEBI" id="CHEBI:18420"/>
        <label>1</label>
    </ligand>
</feature>
<feature type="binding site" evidence="3">
    <location>
        <position position="923"/>
    </location>
    <ligand>
        <name>Mg(2+)</name>
        <dbReference type="ChEBI" id="CHEBI:18420"/>
        <label>2</label>
    </ligand>
</feature>
<feature type="binding site" evidence="3">
    <location>
        <position position="924"/>
    </location>
    <ligand>
        <name>Mg(2+)</name>
        <dbReference type="ChEBI" id="CHEBI:18420"/>
        <label>2</label>
    </ligand>
</feature>
<feature type="binding site" evidence="3">
    <location>
        <position position="967"/>
    </location>
    <ligand>
        <name>Mg(2+)</name>
        <dbReference type="ChEBI" id="CHEBI:18420"/>
        <label>1</label>
    </ligand>
</feature>
<feature type="binding site" evidence="3">
    <location>
        <position position="967"/>
    </location>
    <ligand>
        <name>Mg(2+)</name>
        <dbReference type="ChEBI" id="CHEBI:18420"/>
        <label>2</label>
    </ligand>
</feature>
<feature type="glycosylation site" description="N-linked (GlcNAc...) asparagine" evidence="5">
    <location>
        <position position="72"/>
    </location>
</feature>
<feature type="glycosylation site" description="N-linked (GlcNAc...) asparagine" evidence="5">
    <location>
        <position position="369"/>
    </location>
</feature>
<feature type="glycosylation site" description="N-linked (GlcNAc...) asparagine" evidence="5">
    <location>
        <position position="456"/>
    </location>
</feature>
<dbReference type="EC" id="4.6.1.2" evidence="1"/>
<dbReference type="EMBL" id="AB201389">
    <property type="protein sequence ID" value="BAE78829.1"/>
    <property type="molecule type" value="mRNA"/>
</dbReference>
<dbReference type="EMBL" id="Z82288">
    <property type="protein sequence ID" value="CAB05325.2"/>
    <property type="molecule type" value="Genomic_DNA"/>
</dbReference>
<dbReference type="RefSeq" id="NP_502449.2">
    <property type="nucleotide sequence ID" value="NM_070048.7"/>
</dbReference>
<dbReference type="SMR" id="G5EFQ0"/>
<dbReference type="FunCoup" id="G5EFQ0">
    <property type="interactions" value="70"/>
</dbReference>
<dbReference type="STRING" id="6239.ZK896.8.1"/>
<dbReference type="GlyCosmos" id="G5EFQ0">
    <property type="glycosylation" value="3 sites, No reported glycans"/>
</dbReference>
<dbReference type="PaxDb" id="6239-ZK896.8"/>
<dbReference type="PeptideAtlas" id="G5EFQ0"/>
<dbReference type="EnsemblMetazoa" id="ZK896.8.1">
    <property type="protein sequence ID" value="ZK896.8.1"/>
    <property type="gene ID" value="WBGene00001543"/>
</dbReference>
<dbReference type="GeneID" id="178237"/>
<dbReference type="KEGG" id="cel:CELE_ZK896.8"/>
<dbReference type="AGR" id="WB:WBGene00001543"/>
<dbReference type="CTD" id="178237"/>
<dbReference type="WormBase" id="ZK896.8">
    <property type="protein sequence ID" value="CE42602"/>
    <property type="gene ID" value="WBGene00001543"/>
    <property type="gene designation" value="gcy-18"/>
</dbReference>
<dbReference type="eggNOG" id="KOG1023">
    <property type="taxonomic scope" value="Eukaryota"/>
</dbReference>
<dbReference type="HOGENOM" id="CLU_001072_1_3_1"/>
<dbReference type="InParanoid" id="G5EFQ0"/>
<dbReference type="OMA" id="WGFHTGP"/>
<dbReference type="OrthoDB" id="60033at2759"/>
<dbReference type="PhylomeDB" id="G5EFQ0"/>
<dbReference type="Reactome" id="R-CEL-2514859">
    <property type="pathway name" value="Inactivation, recovery and regulation of the phototransduction cascade"/>
</dbReference>
<dbReference type="PRO" id="PR:G5EFQ0"/>
<dbReference type="Proteomes" id="UP000001940">
    <property type="component" value="Chromosome IV"/>
</dbReference>
<dbReference type="Bgee" id="WBGene00001543">
    <property type="expression patterns" value="Expressed in larva and 3 other cell types or tissues"/>
</dbReference>
<dbReference type="GO" id="GO:0005929">
    <property type="term" value="C:cilium"/>
    <property type="evidence" value="ECO:0007669"/>
    <property type="project" value="UniProtKB-SubCell"/>
</dbReference>
<dbReference type="GO" id="GO:0031528">
    <property type="term" value="C:microvillus membrane"/>
    <property type="evidence" value="ECO:0000314"/>
    <property type="project" value="WormBase"/>
</dbReference>
<dbReference type="GO" id="GO:0044306">
    <property type="term" value="C:neuron projection terminus"/>
    <property type="evidence" value="ECO:0000314"/>
    <property type="project" value="WormBase"/>
</dbReference>
<dbReference type="GO" id="GO:0005886">
    <property type="term" value="C:plasma membrane"/>
    <property type="evidence" value="ECO:0000318"/>
    <property type="project" value="GO_Central"/>
</dbReference>
<dbReference type="GO" id="GO:0005524">
    <property type="term" value="F:ATP binding"/>
    <property type="evidence" value="ECO:0007669"/>
    <property type="project" value="InterPro"/>
</dbReference>
<dbReference type="GO" id="GO:0005525">
    <property type="term" value="F:GTP binding"/>
    <property type="evidence" value="ECO:0007669"/>
    <property type="project" value="UniProtKB-KW"/>
</dbReference>
<dbReference type="GO" id="GO:0004383">
    <property type="term" value="F:guanylate cyclase activity"/>
    <property type="evidence" value="ECO:0000250"/>
    <property type="project" value="WormBase"/>
</dbReference>
<dbReference type="GO" id="GO:0046872">
    <property type="term" value="F:metal ion binding"/>
    <property type="evidence" value="ECO:0007669"/>
    <property type="project" value="UniProtKB-KW"/>
</dbReference>
<dbReference type="GO" id="GO:0001653">
    <property type="term" value="F:peptide receptor activity"/>
    <property type="evidence" value="ECO:0000318"/>
    <property type="project" value="GO_Central"/>
</dbReference>
<dbReference type="GO" id="GO:0004672">
    <property type="term" value="F:protein kinase activity"/>
    <property type="evidence" value="ECO:0007669"/>
    <property type="project" value="InterPro"/>
</dbReference>
<dbReference type="GO" id="GO:0006182">
    <property type="term" value="P:cGMP biosynthetic process"/>
    <property type="evidence" value="ECO:0000318"/>
    <property type="project" value="GO_Central"/>
</dbReference>
<dbReference type="GO" id="GO:0016048">
    <property type="term" value="P:detection of temperature stimulus"/>
    <property type="evidence" value="ECO:0000315"/>
    <property type="project" value="UniProtKB"/>
</dbReference>
<dbReference type="GO" id="GO:0035556">
    <property type="term" value="P:intracellular signal transduction"/>
    <property type="evidence" value="ECO:0007669"/>
    <property type="project" value="InterPro"/>
</dbReference>
<dbReference type="GO" id="GO:0007168">
    <property type="term" value="P:receptor guanylyl cyclase signaling pathway"/>
    <property type="evidence" value="ECO:0000250"/>
    <property type="project" value="WormBase"/>
</dbReference>
<dbReference type="GO" id="GO:0040040">
    <property type="term" value="P:thermosensory behavior"/>
    <property type="evidence" value="ECO:0000316"/>
    <property type="project" value="UniProtKB"/>
</dbReference>
<dbReference type="GO" id="GO:0043052">
    <property type="term" value="P:thermotaxis"/>
    <property type="evidence" value="ECO:0000316"/>
    <property type="project" value="UniProtKB"/>
</dbReference>
<dbReference type="CDD" id="cd07302">
    <property type="entry name" value="CHD"/>
    <property type="match status" value="1"/>
</dbReference>
<dbReference type="CDD" id="cd06352">
    <property type="entry name" value="PBP1_NPR_GC-like"/>
    <property type="match status" value="1"/>
</dbReference>
<dbReference type="FunFam" id="1.10.510.10:FF:001100">
    <property type="entry name" value="Guanylate cyclase"/>
    <property type="match status" value="1"/>
</dbReference>
<dbReference type="FunFam" id="3.30.70.1230:FF:000035">
    <property type="entry name" value="Guanylate cyclase"/>
    <property type="match status" value="1"/>
</dbReference>
<dbReference type="FunFam" id="3.40.50.2300:FF:000272">
    <property type="entry name" value="Guanylate cyclase"/>
    <property type="match status" value="1"/>
</dbReference>
<dbReference type="Gene3D" id="3.40.50.2300">
    <property type="match status" value="2"/>
</dbReference>
<dbReference type="Gene3D" id="3.30.70.1230">
    <property type="entry name" value="Nucleotide cyclase"/>
    <property type="match status" value="1"/>
</dbReference>
<dbReference type="Gene3D" id="1.10.510.10">
    <property type="entry name" value="Transferase(Phosphotransferase) domain 1"/>
    <property type="match status" value="1"/>
</dbReference>
<dbReference type="InterPro" id="IPR001054">
    <property type="entry name" value="A/G_cyclase"/>
</dbReference>
<dbReference type="InterPro" id="IPR018297">
    <property type="entry name" value="A/G_cyclase_CS"/>
</dbReference>
<dbReference type="InterPro" id="IPR001828">
    <property type="entry name" value="ANF_lig-bd_rcpt"/>
</dbReference>
<dbReference type="InterPro" id="IPR050401">
    <property type="entry name" value="Cyclic_nucleotide_synthase"/>
</dbReference>
<dbReference type="InterPro" id="IPR011009">
    <property type="entry name" value="Kinase-like_dom_sf"/>
</dbReference>
<dbReference type="InterPro" id="IPR029787">
    <property type="entry name" value="Nucleotide_cyclase"/>
</dbReference>
<dbReference type="InterPro" id="IPR028082">
    <property type="entry name" value="Peripla_BP_I"/>
</dbReference>
<dbReference type="InterPro" id="IPR000719">
    <property type="entry name" value="Prot_kinase_dom"/>
</dbReference>
<dbReference type="InterPro" id="IPR001245">
    <property type="entry name" value="Ser-Thr/Tyr_kinase_cat_dom"/>
</dbReference>
<dbReference type="PANTHER" id="PTHR11920">
    <property type="entry name" value="GUANYLYL CYCLASE"/>
    <property type="match status" value="1"/>
</dbReference>
<dbReference type="PANTHER" id="PTHR11920:SF370">
    <property type="entry name" value="RECEPTOR-TYPE GUANYLATE CYCLASE GCY-18"/>
    <property type="match status" value="1"/>
</dbReference>
<dbReference type="Pfam" id="PF01094">
    <property type="entry name" value="ANF_receptor"/>
    <property type="match status" value="1"/>
</dbReference>
<dbReference type="Pfam" id="PF00211">
    <property type="entry name" value="Guanylate_cyc"/>
    <property type="match status" value="1"/>
</dbReference>
<dbReference type="Pfam" id="PF07714">
    <property type="entry name" value="PK_Tyr_Ser-Thr"/>
    <property type="match status" value="1"/>
</dbReference>
<dbReference type="SMART" id="SM00044">
    <property type="entry name" value="CYCc"/>
    <property type="match status" value="1"/>
</dbReference>
<dbReference type="SUPFAM" id="SSF55073">
    <property type="entry name" value="Nucleotide cyclase"/>
    <property type="match status" value="1"/>
</dbReference>
<dbReference type="SUPFAM" id="SSF53822">
    <property type="entry name" value="Periplasmic binding protein-like I"/>
    <property type="match status" value="1"/>
</dbReference>
<dbReference type="SUPFAM" id="SSF56112">
    <property type="entry name" value="Protein kinase-like (PK-like)"/>
    <property type="match status" value="1"/>
</dbReference>
<dbReference type="PROSITE" id="PS00452">
    <property type="entry name" value="GUANYLATE_CYCLASE_1"/>
    <property type="match status" value="1"/>
</dbReference>
<dbReference type="PROSITE" id="PS50125">
    <property type="entry name" value="GUANYLATE_CYCLASE_2"/>
    <property type="match status" value="1"/>
</dbReference>
<dbReference type="PROSITE" id="PS50011">
    <property type="entry name" value="PROTEIN_KINASE_DOM"/>
    <property type="match status" value="1"/>
</dbReference>
<evidence type="ECO:0000250" key="1">
    <source>
        <dbReference type="UniProtKB" id="Q19187"/>
    </source>
</evidence>
<evidence type="ECO:0000255" key="2"/>
<evidence type="ECO:0000255" key="3">
    <source>
        <dbReference type="PROSITE-ProRule" id="PRU00099"/>
    </source>
</evidence>
<evidence type="ECO:0000255" key="4">
    <source>
        <dbReference type="PROSITE-ProRule" id="PRU00159"/>
    </source>
</evidence>
<evidence type="ECO:0000255" key="5">
    <source>
        <dbReference type="PROSITE-ProRule" id="PRU00498"/>
    </source>
</evidence>
<evidence type="ECO:0000269" key="6">
    <source>
    </source>
</evidence>
<evidence type="ECO:0000305" key="7"/>
<evidence type="ECO:0000312" key="8">
    <source>
        <dbReference type="EMBL" id="BAE78829.1"/>
    </source>
</evidence>
<evidence type="ECO:0000312" key="9">
    <source>
        <dbReference type="Proteomes" id="UP000001940"/>
    </source>
</evidence>
<evidence type="ECO:0000312" key="10">
    <source>
        <dbReference type="WormBase" id="ZK896.8"/>
    </source>
</evidence>
<sequence length="1113" mass="125822">MLKTLLFILIFFNIPIIAIEEIPDIKENGEKSSYTQFDNGAKLEVNKEHKRVIKIGHIGAVGVMPNDARILNISKENLIEEGLVGDDIEFEIVSRQACSESFEGVAVAAELYHVHQVRAFIGPYCAAELEAVTKMATFWNIPIISYSSVPNAVSDRSVYKTLARVSSKNTNSIAEATVALLLHYKWLKVAIATNTGSTAFERVSIFEEIMHREGVTIVKKVMFDENTDANEMMNSGQLGDLAANARIIICLFSSTKELSKEFMQATYTMRMNNAEYAYIIPWLQSGTKDLTPWIGADGEMLQRVKDHYANAIIVDDVNGFDDSVVSSFVEKIEKHGMQKSDIDVTNINGYLHLFDSLKLYALAIRKVLNETDNEAYVTNGQFIWNRMRRMKFEGVVSRSSSEENKDAGAIGTVLMDDVADRAPIFSAFYISPNRDKVMKMVNMESELISNCDGLKNKSGCFQLKINDIKSGFWPSEDGSMPLDEPICGYRGQRCSYLLEISVGSLIILLILISVVFFFLFRYCENKQLEKMPWRIFHDDLQFIDEEQVKSMMSVGSVTTKLSNIQTGQKQHAIIGVNTHTTYHRYKQRRPIKFIKEDMQLLTQMKQAVHDNLNPFLGAAFNEKEEMLVLWKFCSRGTIQDIIYNANVVLDEKFHGAFVRDITLGLEYLHASPIGYHGSLTPWCCLIDRNWMVKLSDYGIANPLERWEKQGAIEIAAAKDSDDKSQASQATSIIYMAPELLKNRETNKRRGMDQSWVKQSMLRRQAGDIYSFGMVMYEILFRSLPFRDNTNISELVDYLADGSKTVSPEIQNQMGLHPDLNALLRDCWSENPEIRPSIRRVRLNTEMVLKTKGSLVDQMMKMMEQYANNLEKLVAERTGMLEEANIRADQLLTQLLPAYVANELKMGRSVAPKLYSSATILFSDIVGFTTICSGSTPLEVVNMLNGLYTGFDECITRNKSYKVETIGDAYMVVSGIPEENEYNHSRNIANTALDMRQYLTGYQIPHRPTHRVRCRWGFHTGSVAAGVVGLTCPRYCLFGDTVNVSSRMESTGTPGMIQMSEEAHMHIRAHHPVFTTTERGEVQVKGKGTCRTFWLEDRVGDASTTNYIQNVEGV</sequence>
<comment type="function">
    <text evidence="1 6">Guanylate cyclase involved in the production of the second messenger cGMP (By similarity). Regulates thermotaxis responses in AFD sensory neurons. May regulate AFD neuronal activity such as calcium responses to temperature gradients (PubMed:16415369).</text>
</comment>
<comment type="catalytic activity">
    <reaction evidence="1">
        <text>GTP = 3',5'-cyclic GMP + diphosphate</text>
        <dbReference type="Rhea" id="RHEA:13665"/>
        <dbReference type="ChEBI" id="CHEBI:33019"/>
        <dbReference type="ChEBI" id="CHEBI:37565"/>
        <dbReference type="ChEBI" id="CHEBI:57746"/>
        <dbReference type="EC" id="4.6.1.2"/>
    </reaction>
</comment>
<comment type="subcellular location">
    <subcellularLocation>
        <location evidence="7">Cell membrane</location>
        <topology evidence="7">Single-pass type I membrane protein</topology>
    </subcellularLocation>
    <subcellularLocation>
        <location evidence="6">Cell projection</location>
        <location evidence="6">Cilium</location>
    </subcellularLocation>
    <text evidence="6">Localizes exclusively to the sensory ending, known as cilium, in AFD neurons.</text>
</comment>
<comment type="tissue specificity">
    <text evidence="6">Expressed specifically in AFD sensory neurons.</text>
</comment>
<comment type="domain">
    <text evidence="4">The protein kinase domain is predicted to be catalytically inactive.</text>
</comment>
<comment type="similarity">
    <text evidence="3">Belongs to the adenylyl cyclase class-4/guanylyl cyclase family.</text>
</comment>